<sequence>MKDLLKFLKAQTKTEEFDAIKIALASPDMIRSWSFGEVKKPETINYRTFKPERDGLFCARIFGPVKDYECLCGKYKRLKHRGVICEKCGVEVTQTKVRRERMGHIELASPTAHIWFLKSLPSRIGLLLDMPLRDIERVLYFESYVVIEGGMTNLERQQILTEEQYLDALEEFGDEFDAKMGAEAIQALLKSMDLEQECETLREELNETNSETKRKKLTKRIKLLEAFVQSGNKPEWMILTVLPVLPPDLRPLVPLDGGRFATSDLNDLYRRVINRNNRLKRLLDLAAPDIIVRNEKRMLQEAVDALLDNGRRGRAITGSNKRPLKSLADMIKGKQGRFRQNLLGKRVDYSGRSVITVGPYLRLHQCGLPKKMALELFKPFIYGKLELRGLATTIKAAKKMVEREEAVVWDILDEVIREHPVLLNRAPTLHRLGIQAFEPVLIEGKAIQLHPLVCAAYNADFDGDQMAVHVPLTLEAQLEARALMMSTNNILSPANGEPIIVPSQDVVLGLYYMTRDCVNAKGEGMVLTGPKEAERIYRAGLASLHARVKVRITEYEKDENGELVAHTSLKDTTVGRAILWMIVPKGLPFSIVNQALGKKAISKMLNTCYRILGLKPTVIFADQTMYTGFAYAARSGASVGIDDMVIPEKKHEIISEAEAEVAEIQEQFQSGLVTAGERYNKVIDIWAAANDRVSKAMMDNLQTETVVNRDGQEEQQVSFNSIYMMADSGARGSAAQIRQLAGMRGLMAKPDGSIIETPITANFREGLNVLQYFISTHGARKGLADTALKTANSGYLTRRLVDVAQDLVVTEDDCGTHEGILMTPVIEGGDVKEPLRDRVLGRVTAEDVLKPGTADILVPRNTLLHEQWCDLLEANSVDAVKVRSVVSCDTDFGVCAHCYGRDLARGHIINKGEAIGVIAAQSIGEPGTQLTMRTFHIGGAASRAAAESSIQVKNKGSIKLSNVKSVVNSSGKLVITSRNTELKLIDEFGRTKESYKVPYGAVMAKGDGEQVAGGETVANWDPHTMPVITEVSGFIRFTDMIDGQTITRQTDELTGLSSLVVLDSAERTTGGKDLRPALKIVDAQGNDVLIPGTDMPAQYFLPGKAIVQLEDGVQISSGDTLARIPQESGGTKDITGGLPRVADLFEARRPKEPAILAEIAGIVSFGKETKGKRRLVITPVDGSDPYEEMIPKWRQLNVFEGERVERGDVISDGPEAPHDILRLRGVHAVTRYIVNEVQDVYRLQGVKINDKHIEVIVRQMLRKATIESAGSSDFLEGEQVEYSRVKIANRELEANGKVGATFSRDLLGITKASLATESFISAASFQETTRVLTEAAVAGKRDELRGLKENVIVGRLIPAGTGYAYHQDRMRRRAAGEQPATPQVTAEDASASLAELLNAGLGGSDNE</sequence>
<evidence type="ECO:0000255" key="1">
    <source>
        <dbReference type="HAMAP-Rule" id="MF_01322"/>
    </source>
</evidence>
<organism>
    <name type="scientific">Salmonella paratyphi B (strain ATCC BAA-1250 / SPB7)</name>
    <dbReference type="NCBI Taxonomy" id="1016998"/>
    <lineage>
        <taxon>Bacteria</taxon>
        <taxon>Pseudomonadati</taxon>
        <taxon>Pseudomonadota</taxon>
        <taxon>Gammaproteobacteria</taxon>
        <taxon>Enterobacterales</taxon>
        <taxon>Enterobacteriaceae</taxon>
        <taxon>Salmonella</taxon>
    </lineage>
</organism>
<keyword id="KW-0240">DNA-directed RNA polymerase</keyword>
<keyword id="KW-0460">Magnesium</keyword>
<keyword id="KW-0479">Metal-binding</keyword>
<keyword id="KW-0548">Nucleotidyltransferase</keyword>
<keyword id="KW-0804">Transcription</keyword>
<keyword id="KW-0808">Transferase</keyword>
<keyword id="KW-0862">Zinc</keyword>
<feature type="chain" id="PRO_0000353428" description="DNA-directed RNA polymerase subunit beta'">
    <location>
        <begin position="1"/>
        <end position="1407"/>
    </location>
</feature>
<feature type="binding site" evidence="1">
    <location>
        <position position="70"/>
    </location>
    <ligand>
        <name>Zn(2+)</name>
        <dbReference type="ChEBI" id="CHEBI:29105"/>
        <label>1</label>
    </ligand>
</feature>
<feature type="binding site" evidence="1">
    <location>
        <position position="72"/>
    </location>
    <ligand>
        <name>Zn(2+)</name>
        <dbReference type="ChEBI" id="CHEBI:29105"/>
        <label>1</label>
    </ligand>
</feature>
<feature type="binding site" evidence="1">
    <location>
        <position position="85"/>
    </location>
    <ligand>
        <name>Zn(2+)</name>
        <dbReference type="ChEBI" id="CHEBI:29105"/>
        <label>1</label>
    </ligand>
</feature>
<feature type="binding site" evidence="1">
    <location>
        <position position="88"/>
    </location>
    <ligand>
        <name>Zn(2+)</name>
        <dbReference type="ChEBI" id="CHEBI:29105"/>
        <label>1</label>
    </ligand>
</feature>
<feature type="binding site" evidence="1">
    <location>
        <position position="460"/>
    </location>
    <ligand>
        <name>Mg(2+)</name>
        <dbReference type="ChEBI" id="CHEBI:18420"/>
    </ligand>
</feature>
<feature type="binding site" evidence="1">
    <location>
        <position position="462"/>
    </location>
    <ligand>
        <name>Mg(2+)</name>
        <dbReference type="ChEBI" id="CHEBI:18420"/>
    </ligand>
</feature>
<feature type="binding site" evidence="1">
    <location>
        <position position="464"/>
    </location>
    <ligand>
        <name>Mg(2+)</name>
        <dbReference type="ChEBI" id="CHEBI:18420"/>
    </ligand>
</feature>
<feature type="binding site" evidence="1">
    <location>
        <position position="814"/>
    </location>
    <ligand>
        <name>Zn(2+)</name>
        <dbReference type="ChEBI" id="CHEBI:29105"/>
        <label>2</label>
    </ligand>
</feature>
<feature type="binding site" evidence="1">
    <location>
        <position position="888"/>
    </location>
    <ligand>
        <name>Zn(2+)</name>
        <dbReference type="ChEBI" id="CHEBI:29105"/>
        <label>2</label>
    </ligand>
</feature>
<feature type="binding site" evidence="1">
    <location>
        <position position="895"/>
    </location>
    <ligand>
        <name>Zn(2+)</name>
        <dbReference type="ChEBI" id="CHEBI:29105"/>
        <label>2</label>
    </ligand>
</feature>
<feature type="binding site" evidence="1">
    <location>
        <position position="898"/>
    </location>
    <ligand>
        <name>Zn(2+)</name>
        <dbReference type="ChEBI" id="CHEBI:29105"/>
        <label>2</label>
    </ligand>
</feature>
<protein>
    <recommendedName>
        <fullName evidence="1">DNA-directed RNA polymerase subunit beta'</fullName>
        <shortName evidence="1">RNAP subunit beta'</shortName>
        <ecNumber evidence="1">2.7.7.6</ecNumber>
    </recommendedName>
    <alternativeName>
        <fullName evidence="1">RNA polymerase subunit beta'</fullName>
    </alternativeName>
    <alternativeName>
        <fullName evidence="1">Transcriptase subunit beta'</fullName>
    </alternativeName>
</protein>
<reference key="1">
    <citation type="submission" date="2007-11" db="EMBL/GenBank/DDBJ databases">
        <authorList>
            <consortium name="The Salmonella enterica serovar Paratyphi B Genome Sequencing Project"/>
            <person name="McClelland M."/>
            <person name="Sanderson E.K."/>
            <person name="Porwollik S."/>
            <person name="Spieth J."/>
            <person name="Clifton W.S."/>
            <person name="Fulton R."/>
            <person name="Cordes M."/>
            <person name="Wollam A."/>
            <person name="Shah N."/>
            <person name="Pepin K."/>
            <person name="Bhonagiri V."/>
            <person name="Nash W."/>
            <person name="Johnson M."/>
            <person name="Thiruvilangam P."/>
            <person name="Wilson R."/>
        </authorList>
    </citation>
    <scope>NUCLEOTIDE SEQUENCE [LARGE SCALE GENOMIC DNA]</scope>
    <source>
        <strain>ATCC BAA-1250 / SPB7</strain>
    </source>
</reference>
<dbReference type="EC" id="2.7.7.6" evidence="1"/>
<dbReference type="EMBL" id="CP000886">
    <property type="protein sequence ID" value="ABX70424.1"/>
    <property type="molecule type" value="Genomic_DNA"/>
</dbReference>
<dbReference type="RefSeq" id="WP_000653973.1">
    <property type="nucleotide sequence ID" value="NC_010102.1"/>
</dbReference>
<dbReference type="SMR" id="A9N0J5"/>
<dbReference type="KEGG" id="spq:SPAB_05143"/>
<dbReference type="PATRIC" id="fig|1016998.12.peg.4818"/>
<dbReference type="HOGENOM" id="CLU_000524_3_1_6"/>
<dbReference type="BioCyc" id="SENT1016998:SPAB_RS20930-MONOMER"/>
<dbReference type="Proteomes" id="UP000008556">
    <property type="component" value="Chromosome"/>
</dbReference>
<dbReference type="GO" id="GO:0000428">
    <property type="term" value="C:DNA-directed RNA polymerase complex"/>
    <property type="evidence" value="ECO:0007669"/>
    <property type="project" value="UniProtKB-KW"/>
</dbReference>
<dbReference type="GO" id="GO:0003677">
    <property type="term" value="F:DNA binding"/>
    <property type="evidence" value="ECO:0007669"/>
    <property type="project" value="UniProtKB-UniRule"/>
</dbReference>
<dbReference type="GO" id="GO:0003899">
    <property type="term" value="F:DNA-directed RNA polymerase activity"/>
    <property type="evidence" value="ECO:0007669"/>
    <property type="project" value="UniProtKB-UniRule"/>
</dbReference>
<dbReference type="GO" id="GO:0000287">
    <property type="term" value="F:magnesium ion binding"/>
    <property type="evidence" value="ECO:0007669"/>
    <property type="project" value="UniProtKB-UniRule"/>
</dbReference>
<dbReference type="GO" id="GO:0008270">
    <property type="term" value="F:zinc ion binding"/>
    <property type="evidence" value="ECO:0007669"/>
    <property type="project" value="UniProtKB-UniRule"/>
</dbReference>
<dbReference type="GO" id="GO:0006351">
    <property type="term" value="P:DNA-templated transcription"/>
    <property type="evidence" value="ECO:0007669"/>
    <property type="project" value="UniProtKB-UniRule"/>
</dbReference>
<dbReference type="CDD" id="cd02655">
    <property type="entry name" value="RNAP_beta'_C"/>
    <property type="match status" value="1"/>
</dbReference>
<dbReference type="CDD" id="cd01609">
    <property type="entry name" value="RNAP_beta'_N"/>
    <property type="match status" value="1"/>
</dbReference>
<dbReference type="FunFam" id="1.10.132.30:FF:000003">
    <property type="entry name" value="DNA-directed RNA polymerase subunit beta"/>
    <property type="match status" value="1"/>
</dbReference>
<dbReference type="FunFam" id="1.10.150.390:FF:000002">
    <property type="entry name" value="DNA-directed RNA polymerase subunit beta"/>
    <property type="match status" value="1"/>
</dbReference>
<dbReference type="FunFam" id="1.10.274.100:FF:000002">
    <property type="entry name" value="DNA-directed RNA polymerase subunit beta"/>
    <property type="match status" value="1"/>
</dbReference>
<dbReference type="FunFam" id="1.10.40.90:FF:000001">
    <property type="entry name" value="DNA-directed RNA polymerase subunit beta"/>
    <property type="match status" value="1"/>
</dbReference>
<dbReference type="FunFam" id="2.40.50.100:FF:000012">
    <property type="entry name" value="DNA-directed RNA polymerase subunit beta"/>
    <property type="match status" value="1"/>
</dbReference>
<dbReference type="FunFam" id="2.40.50.100:FF:000016">
    <property type="entry name" value="DNA-directed RNA polymerase subunit beta"/>
    <property type="match status" value="1"/>
</dbReference>
<dbReference type="FunFam" id="2.40.50.100:FF:000019">
    <property type="entry name" value="DNA-directed RNA polymerase subunit beta"/>
    <property type="match status" value="1"/>
</dbReference>
<dbReference type="FunFam" id="4.10.860.120:FF:000001">
    <property type="entry name" value="DNA-directed RNA polymerase subunit beta"/>
    <property type="match status" value="1"/>
</dbReference>
<dbReference type="Gene3D" id="1.10.132.30">
    <property type="match status" value="1"/>
</dbReference>
<dbReference type="Gene3D" id="1.10.150.390">
    <property type="match status" value="1"/>
</dbReference>
<dbReference type="Gene3D" id="1.10.1790.20">
    <property type="match status" value="1"/>
</dbReference>
<dbReference type="Gene3D" id="1.10.40.90">
    <property type="match status" value="1"/>
</dbReference>
<dbReference type="Gene3D" id="2.40.40.20">
    <property type="match status" value="1"/>
</dbReference>
<dbReference type="Gene3D" id="2.40.50.100">
    <property type="match status" value="3"/>
</dbReference>
<dbReference type="Gene3D" id="4.10.860.120">
    <property type="entry name" value="RNA polymerase II, clamp domain"/>
    <property type="match status" value="1"/>
</dbReference>
<dbReference type="Gene3D" id="1.10.274.100">
    <property type="entry name" value="RNA polymerase Rpb1, domain 3"/>
    <property type="match status" value="2"/>
</dbReference>
<dbReference type="HAMAP" id="MF_01322">
    <property type="entry name" value="RNApol_bact_RpoC"/>
    <property type="match status" value="1"/>
</dbReference>
<dbReference type="InterPro" id="IPR045867">
    <property type="entry name" value="DNA-dir_RpoC_beta_prime"/>
</dbReference>
<dbReference type="InterPro" id="IPR012754">
    <property type="entry name" value="DNA-dir_RpoC_beta_prime_bact"/>
</dbReference>
<dbReference type="InterPro" id="IPR000722">
    <property type="entry name" value="RNA_pol_asu"/>
</dbReference>
<dbReference type="InterPro" id="IPR006592">
    <property type="entry name" value="RNA_pol_N"/>
</dbReference>
<dbReference type="InterPro" id="IPR007080">
    <property type="entry name" value="RNA_pol_Rpb1_1"/>
</dbReference>
<dbReference type="InterPro" id="IPR007066">
    <property type="entry name" value="RNA_pol_Rpb1_3"/>
</dbReference>
<dbReference type="InterPro" id="IPR042102">
    <property type="entry name" value="RNA_pol_Rpb1_3_sf"/>
</dbReference>
<dbReference type="InterPro" id="IPR007083">
    <property type="entry name" value="RNA_pol_Rpb1_4"/>
</dbReference>
<dbReference type="InterPro" id="IPR007081">
    <property type="entry name" value="RNA_pol_Rpb1_5"/>
</dbReference>
<dbReference type="InterPro" id="IPR044893">
    <property type="entry name" value="RNA_pol_Rpb1_clamp_domain"/>
</dbReference>
<dbReference type="InterPro" id="IPR038120">
    <property type="entry name" value="Rpb1_funnel_sf"/>
</dbReference>
<dbReference type="NCBIfam" id="TIGR02386">
    <property type="entry name" value="rpoC_TIGR"/>
    <property type="match status" value="1"/>
</dbReference>
<dbReference type="PANTHER" id="PTHR19376">
    <property type="entry name" value="DNA-DIRECTED RNA POLYMERASE"/>
    <property type="match status" value="1"/>
</dbReference>
<dbReference type="PANTHER" id="PTHR19376:SF54">
    <property type="entry name" value="DNA-DIRECTED RNA POLYMERASE SUBUNIT BETA"/>
    <property type="match status" value="1"/>
</dbReference>
<dbReference type="Pfam" id="PF04997">
    <property type="entry name" value="RNA_pol_Rpb1_1"/>
    <property type="match status" value="1"/>
</dbReference>
<dbReference type="Pfam" id="PF00623">
    <property type="entry name" value="RNA_pol_Rpb1_2"/>
    <property type="match status" value="2"/>
</dbReference>
<dbReference type="Pfam" id="PF04983">
    <property type="entry name" value="RNA_pol_Rpb1_3"/>
    <property type="match status" value="1"/>
</dbReference>
<dbReference type="Pfam" id="PF05000">
    <property type="entry name" value="RNA_pol_Rpb1_4"/>
    <property type="match status" value="1"/>
</dbReference>
<dbReference type="Pfam" id="PF04998">
    <property type="entry name" value="RNA_pol_Rpb1_5"/>
    <property type="match status" value="1"/>
</dbReference>
<dbReference type="SMART" id="SM00663">
    <property type="entry name" value="RPOLA_N"/>
    <property type="match status" value="1"/>
</dbReference>
<dbReference type="SUPFAM" id="SSF64484">
    <property type="entry name" value="beta and beta-prime subunits of DNA dependent RNA-polymerase"/>
    <property type="match status" value="1"/>
</dbReference>
<gene>
    <name evidence="1" type="primary">rpoC</name>
    <name type="ordered locus">SPAB_05143</name>
</gene>
<proteinExistence type="inferred from homology"/>
<accession>A9N0J5</accession>
<comment type="function">
    <text evidence="1">DNA-dependent RNA polymerase catalyzes the transcription of DNA into RNA using the four ribonucleoside triphosphates as substrates.</text>
</comment>
<comment type="catalytic activity">
    <reaction evidence="1">
        <text>RNA(n) + a ribonucleoside 5'-triphosphate = RNA(n+1) + diphosphate</text>
        <dbReference type="Rhea" id="RHEA:21248"/>
        <dbReference type="Rhea" id="RHEA-COMP:14527"/>
        <dbReference type="Rhea" id="RHEA-COMP:17342"/>
        <dbReference type="ChEBI" id="CHEBI:33019"/>
        <dbReference type="ChEBI" id="CHEBI:61557"/>
        <dbReference type="ChEBI" id="CHEBI:140395"/>
        <dbReference type="EC" id="2.7.7.6"/>
    </reaction>
</comment>
<comment type="cofactor">
    <cofactor evidence="1">
        <name>Mg(2+)</name>
        <dbReference type="ChEBI" id="CHEBI:18420"/>
    </cofactor>
    <text evidence="1">Binds 1 Mg(2+) ion per subunit.</text>
</comment>
<comment type="cofactor">
    <cofactor evidence="1">
        <name>Zn(2+)</name>
        <dbReference type="ChEBI" id="CHEBI:29105"/>
    </cofactor>
    <text evidence="1">Binds 2 Zn(2+) ions per subunit.</text>
</comment>
<comment type="subunit">
    <text evidence="1">The RNAP catalytic core consists of 2 alpha, 1 beta, 1 beta' and 1 omega subunit. When a sigma factor is associated with the core the holoenzyme is formed, which can initiate transcription.</text>
</comment>
<comment type="similarity">
    <text evidence="1">Belongs to the RNA polymerase beta' chain family.</text>
</comment>
<name>RPOC_SALPB</name>